<reference key="1">
    <citation type="journal article" date="2005" name="Science">
        <title>Genome sequence of the PCE-dechlorinating bacterium Dehalococcoides ethenogenes.</title>
        <authorList>
            <person name="Seshadri R."/>
            <person name="Adrian L."/>
            <person name="Fouts D.E."/>
            <person name="Eisen J.A."/>
            <person name="Phillippy A.M."/>
            <person name="Methe B.A."/>
            <person name="Ward N.L."/>
            <person name="Nelson W.C."/>
            <person name="DeBoy R.T."/>
            <person name="Khouri H.M."/>
            <person name="Kolonay J.F."/>
            <person name="Dodson R.J."/>
            <person name="Daugherty S.C."/>
            <person name="Brinkac L.M."/>
            <person name="Sullivan S.A."/>
            <person name="Madupu R."/>
            <person name="Nelson K.E."/>
            <person name="Kang K.H."/>
            <person name="Impraim M."/>
            <person name="Tran K."/>
            <person name="Robinson J.M."/>
            <person name="Forberger H.A."/>
            <person name="Fraser C.M."/>
            <person name="Zinder S.H."/>
            <person name="Heidelberg J.F."/>
        </authorList>
    </citation>
    <scope>NUCLEOTIDE SEQUENCE [LARGE SCALE GENOMIC DNA]</scope>
    <source>
        <strain>ATCC BAA-2266 / KCTC 15142 / 195</strain>
    </source>
</reference>
<gene>
    <name evidence="1" type="primary">dapA</name>
    <name type="ordered locus">DET0973</name>
</gene>
<keyword id="KW-0028">Amino-acid biosynthesis</keyword>
<keyword id="KW-0963">Cytoplasm</keyword>
<keyword id="KW-0220">Diaminopimelate biosynthesis</keyword>
<keyword id="KW-0456">Lyase</keyword>
<keyword id="KW-0457">Lysine biosynthesis</keyword>
<keyword id="KW-0704">Schiff base</keyword>
<comment type="function">
    <text evidence="1">Catalyzes the condensation of (S)-aspartate-beta-semialdehyde [(S)-ASA] and pyruvate to 4-hydroxy-tetrahydrodipicolinate (HTPA).</text>
</comment>
<comment type="catalytic activity">
    <reaction evidence="1">
        <text>L-aspartate 4-semialdehyde + pyruvate = (2S,4S)-4-hydroxy-2,3,4,5-tetrahydrodipicolinate + H2O + H(+)</text>
        <dbReference type="Rhea" id="RHEA:34171"/>
        <dbReference type="ChEBI" id="CHEBI:15361"/>
        <dbReference type="ChEBI" id="CHEBI:15377"/>
        <dbReference type="ChEBI" id="CHEBI:15378"/>
        <dbReference type="ChEBI" id="CHEBI:67139"/>
        <dbReference type="ChEBI" id="CHEBI:537519"/>
        <dbReference type="EC" id="4.3.3.7"/>
    </reaction>
</comment>
<comment type="pathway">
    <text evidence="1">Amino-acid biosynthesis; L-lysine biosynthesis via DAP pathway; (S)-tetrahydrodipicolinate from L-aspartate: step 3/4.</text>
</comment>
<comment type="subunit">
    <text evidence="1">Homotetramer; dimer of dimers.</text>
</comment>
<comment type="subcellular location">
    <subcellularLocation>
        <location evidence="1">Cytoplasm</location>
    </subcellularLocation>
</comment>
<comment type="similarity">
    <text evidence="1">Belongs to the DapA family.</text>
</comment>
<comment type="caution">
    <text evidence="2">Was originally thought to be a dihydrodipicolinate synthase (DHDPS), catalyzing the condensation of (S)-aspartate-beta-semialdehyde [(S)-ASA] and pyruvate to dihydrodipicolinate (DHDP). However, it was shown in E.coli that the product of the enzymatic reaction is not dihydrodipicolinate but in fact (4S)-4-hydroxy-2,3,4,5-tetrahydro-(2S)-dipicolinic acid (HTPA), and that the consecutive dehydration reaction leading to DHDP is not spontaneous but catalyzed by DapB.</text>
</comment>
<evidence type="ECO:0000255" key="1">
    <source>
        <dbReference type="HAMAP-Rule" id="MF_00418"/>
    </source>
</evidence>
<evidence type="ECO:0000305" key="2"/>
<organism>
    <name type="scientific">Dehalococcoides mccartyi (strain ATCC BAA-2266 / KCTC 15142 / 195)</name>
    <name type="common">Dehalococcoides ethenogenes (strain 195)</name>
    <dbReference type="NCBI Taxonomy" id="243164"/>
    <lineage>
        <taxon>Bacteria</taxon>
        <taxon>Bacillati</taxon>
        <taxon>Chloroflexota</taxon>
        <taxon>Dehalococcoidia</taxon>
        <taxon>Dehalococcoidales</taxon>
        <taxon>Dehalococcoidaceae</taxon>
        <taxon>Dehalococcoides</taxon>
    </lineage>
</organism>
<name>DAPA_DEHM1</name>
<feature type="chain" id="PRO_1000050184" description="4-hydroxy-tetrahydrodipicolinate synthase">
    <location>
        <begin position="1"/>
        <end position="297"/>
    </location>
</feature>
<feature type="active site" description="Proton donor/acceptor" evidence="1">
    <location>
        <position position="135"/>
    </location>
</feature>
<feature type="active site" description="Schiff-base intermediate with substrate" evidence="1">
    <location>
        <position position="163"/>
    </location>
</feature>
<feature type="binding site" evidence="1">
    <location>
        <position position="47"/>
    </location>
    <ligand>
        <name>pyruvate</name>
        <dbReference type="ChEBI" id="CHEBI:15361"/>
    </ligand>
</feature>
<feature type="binding site" evidence="1">
    <location>
        <position position="205"/>
    </location>
    <ligand>
        <name>pyruvate</name>
        <dbReference type="ChEBI" id="CHEBI:15361"/>
    </ligand>
</feature>
<feature type="site" description="Part of a proton relay during catalysis" evidence="1">
    <location>
        <position position="46"/>
    </location>
</feature>
<feature type="site" description="Part of a proton relay during catalysis" evidence="1">
    <location>
        <position position="109"/>
    </location>
</feature>
<sequence length="297" mass="31964">MKELGRLITAMVTPFKKDGTVDYAQAQKLALGLLDSGSDGLVVVGTTGESPTVTWEEEHALFAAVKSAVGNRGKVIAGTGANSTQEALENTLKAEKIGVDACLLVVPYYNKPTQEGLYLHFKTIAEATKLPCILYNVPSRTITHMSPETVIRLSQIPNIVGVKEASGKLDDIAQIINNVRPDFTVWSGNDSDTLPMLAMGAYGVISVASHIVGKQIKEMITSFVSGNTDNAAAIHRHLTPLIRSLFVVSNPIPIKYALNYLGFEVGGLRLPMTEADEKTAALIRESLKGYTIDLPIK</sequence>
<protein>
    <recommendedName>
        <fullName evidence="1">4-hydroxy-tetrahydrodipicolinate synthase</fullName>
        <shortName evidence="1">HTPA synthase</shortName>
        <ecNumber evidence="1">4.3.3.7</ecNumber>
    </recommendedName>
</protein>
<proteinExistence type="inferred from homology"/>
<accession>Q3Z7V3</accession>
<dbReference type="EC" id="4.3.3.7" evidence="1"/>
<dbReference type="EMBL" id="CP000027">
    <property type="protein sequence ID" value="AAW39713.1"/>
    <property type="molecule type" value="Genomic_DNA"/>
</dbReference>
<dbReference type="RefSeq" id="WP_010936675.1">
    <property type="nucleotide sequence ID" value="NC_002936.3"/>
</dbReference>
<dbReference type="SMR" id="Q3Z7V3"/>
<dbReference type="FunCoup" id="Q3Z7V3">
    <property type="interactions" value="216"/>
</dbReference>
<dbReference type="STRING" id="243164.DET0973"/>
<dbReference type="GeneID" id="3229675"/>
<dbReference type="KEGG" id="det:DET0973"/>
<dbReference type="PATRIC" id="fig|243164.10.peg.922"/>
<dbReference type="eggNOG" id="COG0329">
    <property type="taxonomic scope" value="Bacteria"/>
</dbReference>
<dbReference type="HOGENOM" id="CLU_049343_7_1_0"/>
<dbReference type="InParanoid" id="Q3Z7V3"/>
<dbReference type="UniPathway" id="UPA00034">
    <property type="reaction ID" value="UER00017"/>
</dbReference>
<dbReference type="Proteomes" id="UP000008289">
    <property type="component" value="Chromosome"/>
</dbReference>
<dbReference type="GO" id="GO:0005829">
    <property type="term" value="C:cytosol"/>
    <property type="evidence" value="ECO:0007669"/>
    <property type="project" value="TreeGrafter"/>
</dbReference>
<dbReference type="GO" id="GO:0008840">
    <property type="term" value="F:4-hydroxy-tetrahydrodipicolinate synthase activity"/>
    <property type="evidence" value="ECO:0007669"/>
    <property type="project" value="UniProtKB-UniRule"/>
</dbReference>
<dbReference type="GO" id="GO:0019877">
    <property type="term" value="P:diaminopimelate biosynthetic process"/>
    <property type="evidence" value="ECO:0007669"/>
    <property type="project" value="UniProtKB-UniRule"/>
</dbReference>
<dbReference type="GO" id="GO:0009089">
    <property type="term" value="P:lysine biosynthetic process via diaminopimelate"/>
    <property type="evidence" value="ECO:0007669"/>
    <property type="project" value="UniProtKB-UniRule"/>
</dbReference>
<dbReference type="CDD" id="cd00950">
    <property type="entry name" value="DHDPS"/>
    <property type="match status" value="1"/>
</dbReference>
<dbReference type="Gene3D" id="3.20.20.70">
    <property type="entry name" value="Aldolase class I"/>
    <property type="match status" value="1"/>
</dbReference>
<dbReference type="HAMAP" id="MF_00418">
    <property type="entry name" value="DapA"/>
    <property type="match status" value="1"/>
</dbReference>
<dbReference type="InterPro" id="IPR013785">
    <property type="entry name" value="Aldolase_TIM"/>
</dbReference>
<dbReference type="InterPro" id="IPR005263">
    <property type="entry name" value="DapA"/>
</dbReference>
<dbReference type="InterPro" id="IPR002220">
    <property type="entry name" value="DapA-like"/>
</dbReference>
<dbReference type="InterPro" id="IPR020625">
    <property type="entry name" value="Schiff_base-form_aldolases_AS"/>
</dbReference>
<dbReference type="InterPro" id="IPR020624">
    <property type="entry name" value="Schiff_base-form_aldolases_CS"/>
</dbReference>
<dbReference type="NCBIfam" id="TIGR00674">
    <property type="entry name" value="dapA"/>
    <property type="match status" value="1"/>
</dbReference>
<dbReference type="PANTHER" id="PTHR12128:SF66">
    <property type="entry name" value="4-HYDROXY-2-OXOGLUTARATE ALDOLASE, MITOCHONDRIAL"/>
    <property type="match status" value="1"/>
</dbReference>
<dbReference type="PANTHER" id="PTHR12128">
    <property type="entry name" value="DIHYDRODIPICOLINATE SYNTHASE"/>
    <property type="match status" value="1"/>
</dbReference>
<dbReference type="Pfam" id="PF00701">
    <property type="entry name" value="DHDPS"/>
    <property type="match status" value="1"/>
</dbReference>
<dbReference type="PIRSF" id="PIRSF001365">
    <property type="entry name" value="DHDPS"/>
    <property type="match status" value="1"/>
</dbReference>
<dbReference type="PRINTS" id="PR00146">
    <property type="entry name" value="DHPICSNTHASE"/>
</dbReference>
<dbReference type="SMART" id="SM01130">
    <property type="entry name" value="DHDPS"/>
    <property type="match status" value="1"/>
</dbReference>
<dbReference type="SUPFAM" id="SSF51569">
    <property type="entry name" value="Aldolase"/>
    <property type="match status" value="1"/>
</dbReference>
<dbReference type="PROSITE" id="PS00665">
    <property type="entry name" value="DHDPS_1"/>
    <property type="match status" value="1"/>
</dbReference>
<dbReference type="PROSITE" id="PS00666">
    <property type="entry name" value="DHDPS_2"/>
    <property type="match status" value="1"/>
</dbReference>